<organism>
    <name type="scientific">Mus musculus</name>
    <name type="common">Mouse</name>
    <dbReference type="NCBI Taxonomy" id="10090"/>
    <lineage>
        <taxon>Eukaryota</taxon>
        <taxon>Metazoa</taxon>
        <taxon>Chordata</taxon>
        <taxon>Craniata</taxon>
        <taxon>Vertebrata</taxon>
        <taxon>Euteleostomi</taxon>
        <taxon>Mammalia</taxon>
        <taxon>Eutheria</taxon>
        <taxon>Euarchontoglires</taxon>
        <taxon>Glires</taxon>
        <taxon>Rodentia</taxon>
        <taxon>Myomorpha</taxon>
        <taxon>Muroidea</taxon>
        <taxon>Muridae</taxon>
        <taxon>Murinae</taxon>
        <taxon>Mus</taxon>
        <taxon>Mus</taxon>
    </lineage>
</organism>
<gene>
    <name type="primary">Tff2</name>
    <name type="synonym">Sml1</name>
    <name type="synonym">Sp</name>
</gene>
<reference key="1">
    <citation type="journal article" date="1990" name="EMBO J.">
        <title>hSP, the domain-duplicated homolog of pS2 protein, is co-expressed with pS2 in stomach but not in breast carcinoma.</title>
        <authorList>
            <person name="Tomasetto C."/>
            <person name="Rio M.C."/>
            <person name="Gautier C."/>
            <person name="Wolf C."/>
            <person name="Hareuveni M."/>
            <person name="Chambon P."/>
            <person name="Lathe R."/>
        </authorList>
    </citation>
    <scope>NUCLEOTIDE SEQUENCE OF 2-129</scope>
    <source>
        <tissue>Pancreas</tissue>
        <tissue>Stomach</tissue>
    </source>
</reference>
<reference key="2">
    <citation type="submission" date="1997-06" db="EMBL/GenBank/DDBJ databases">
        <authorList>
            <person name="Taupin D."/>
            <person name="Bei H."/>
            <person name="Hocker M."/>
            <person name="Wang T."/>
            <person name="Podolsky D."/>
        </authorList>
    </citation>
    <scope>NUCLEOTIDE SEQUENCE</scope>
    <source>
        <strain>129/Sv</strain>
    </source>
</reference>
<reference key="3">
    <citation type="journal article" date="2010" name="Cell">
        <title>A tissue-specific atlas of mouse protein phosphorylation and expression.</title>
        <authorList>
            <person name="Huttlin E.L."/>
            <person name="Jedrychowski M.P."/>
            <person name="Elias J.E."/>
            <person name="Goswami T."/>
            <person name="Rad R."/>
            <person name="Beausoleil S.A."/>
            <person name="Villen J."/>
            <person name="Haas W."/>
            <person name="Sowa M.E."/>
            <person name="Gygi S.P."/>
        </authorList>
    </citation>
    <scope>IDENTIFICATION BY MASS SPECTROMETRY [LARGE SCALE ANALYSIS]</scope>
    <source>
        <tissue>Pancreas</tissue>
    </source>
</reference>
<accession>Q03404</accession>
<accession>O08913</accession>
<comment type="function">
    <text evidence="1">Inhibits gastrointestinal motility and gastric acid secretion. Could function as a structural component of gastric mucus, possibly by stabilizing glycoproteins in the mucus gel through interactions with carbohydrate side chains (By similarity).</text>
</comment>
<comment type="subcellular location">
    <subcellularLocation>
        <location>Secreted</location>
    </subcellularLocation>
</comment>
<comment type="tissue specificity">
    <text>Stomach and pancreas.</text>
</comment>
<protein>
    <recommendedName>
        <fullName>Trefoil factor 2</fullName>
    </recommendedName>
    <alternativeName>
        <fullName>Spasmolytic polypeptide</fullName>
        <shortName>SP</shortName>
    </alternativeName>
</protein>
<proteinExistence type="evidence at protein level"/>
<feature type="signal peptide" evidence="2">
    <location>
        <begin position="1"/>
        <end position="23"/>
    </location>
</feature>
<feature type="chain" id="PRO_0000023461" description="Trefoil factor 2">
    <location>
        <begin position="24"/>
        <end position="129"/>
    </location>
</feature>
<feature type="domain" description="P-type 1" evidence="3">
    <location>
        <begin position="29"/>
        <end position="73"/>
    </location>
</feature>
<feature type="domain" description="P-type 2" evidence="3">
    <location>
        <begin position="79"/>
        <end position="122"/>
    </location>
</feature>
<feature type="disulfide bond" evidence="3">
    <location>
        <begin position="29"/>
        <end position="127"/>
    </location>
</feature>
<feature type="disulfide bond" evidence="3">
    <location>
        <begin position="31"/>
        <end position="58"/>
    </location>
</feature>
<feature type="disulfide bond" evidence="3">
    <location>
        <begin position="42"/>
        <end position="57"/>
    </location>
</feature>
<feature type="disulfide bond" evidence="3">
    <location>
        <begin position="52"/>
        <end position="69"/>
    </location>
</feature>
<feature type="disulfide bond" evidence="3">
    <location>
        <begin position="81"/>
        <end position="107"/>
    </location>
</feature>
<feature type="disulfide bond" evidence="3">
    <location>
        <begin position="91"/>
        <end position="106"/>
    </location>
</feature>
<feature type="disulfide bond" evidence="3">
    <location>
        <begin position="101"/>
        <end position="118"/>
    </location>
</feature>
<sequence length="129" mass="14172">MGPRGAPLLAVVLVLGLHALVEGEKPSPCRCSRLTPHNRKNCGFPGITSEQCFDLGCCFDSSVAGVPWCFHPLPNQESEQCVMEVSARKNCGYPGISPEDCASRNCCFSNLIFEVPWCFFPQSVEDCHY</sequence>
<evidence type="ECO:0000250" key="1"/>
<evidence type="ECO:0000255" key="2"/>
<evidence type="ECO:0000255" key="3">
    <source>
        <dbReference type="PROSITE-ProRule" id="PRU00779"/>
    </source>
</evidence>
<name>TFF2_MOUSE</name>
<dbReference type="EMBL" id="X51697">
    <property type="protein sequence ID" value="CAA35994.1"/>
    <property type="molecule type" value="mRNA"/>
</dbReference>
<dbReference type="EMBL" id="U78770">
    <property type="protein sequence ID" value="AAB58490.1"/>
    <property type="molecule type" value="Genomic_DNA"/>
</dbReference>
<dbReference type="CCDS" id="CCDS37545.1"/>
<dbReference type="PIR" id="S12372">
    <property type="entry name" value="S12372"/>
</dbReference>
<dbReference type="SMR" id="Q03404"/>
<dbReference type="FunCoup" id="Q03404">
    <property type="interactions" value="332"/>
</dbReference>
<dbReference type="STRING" id="10090.ENSMUSP00000024826"/>
<dbReference type="PhosphoSitePlus" id="Q03404"/>
<dbReference type="PaxDb" id="10090-ENSMUSP00000024826"/>
<dbReference type="ProteomicsDB" id="262799"/>
<dbReference type="AGR" id="MGI:1306805"/>
<dbReference type="MGI" id="MGI:1306805">
    <property type="gene designation" value="Tff2"/>
</dbReference>
<dbReference type="eggNOG" id="ENOG502S5ZY">
    <property type="taxonomic scope" value="Eukaryota"/>
</dbReference>
<dbReference type="InParanoid" id="Q03404"/>
<dbReference type="PhylomeDB" id="Q03404"/>
<dbReference type="ChiTaRS" id="Tff2">
    <property type="organism name" value="mouse"/>
</dbReference>
<dbReference type="PRO" id="PR:Q03404"/>
<dbReference type="Proteomes" id="UP000000589">
    <property type="component" value="Unplaced"/>
</dbReference>
<dbReference type="RNAct" id="Q03404">
    <property type="molecule type" value="protein"/>
</dbReference>
<dbReference type="GO" id="GO:0005615">
    <property type="term" value="C:extracellular space"/>
    <property type="evidence" value="ECO:0000314"/>
    <property type="project" value="MGI"/>
</dbReference>
<dbReference type="GO" id="GO:0031723">
    <property type="term" value="F:CXCR4 chemokine receptor binding"/>
    <property type="evidence" value="ECO:0000314"/>
    <property type="project" value="MGI"/>
</dbReference>
<dbReference type="GO" id="GO:0019722">
    <property type="term" value="P:calcium-mediated signaling"/>
    <property type="evidence" value="ECO:0000314"/>
    <property type="project" value="MGI"/>
</dbReference>
<dbReference type="GO" id="GO:0008283">
    <property type="term" value="P:cell population proliferation"/>
    <property type="evidence" value="ECO:0000315"/>
    <property type="project" value="MGI"/>
</dbReference>
<dbReference type="GO" id="GO:0070098">
    <property type="term" value="P:chemokine-mediated signaling pathway"/>
    <property type="evidence" value="ECO:0000316"/>
    <property type="project" value="MGI"/>
</dbReference>
<dbReference type="GO" id="GO:0051649">
    <property type="term" value="P:establishment of localization in cell"/>
    <property type="evidence" value="ECO:0000315"/>
    <property type="project" value="MGI"/>
</dbReference>
<dbReference type="GO" id="GO:0001696">
    <property type="term" value="P:gastric acid secretion"/>
    <property type="evidence" value="ECO:0000315"/>
    <property type="project" value="MGI"/>
</dbReference>
<dbReference type="GO" id="GO:0042116">
    <property type="term" value="P:macrophage activation"/>
    <property type="evidence" value="ECO:0000315"/>
    <property type="project" value="MGI"/>
</dbReference>
<dbReference type="GO" id="GO:0060455">
    <property type="term" value="P:negative regulation of gastric acid secretion"/>
    <property type="evidence" value="ECO:0000315"/>
    <property type="project" value="MGI"/>
</dbReference>
<dbReference type="GO" id="GO:0050728">
    <property type="term" value="P:negative regulation of inflammatory response"/>
    <property type="evidence" value="ECO:0000315"/>
    <property type="project" value="MGI"/>
</dbReference>
<dbReference type="GO" id="GO:0043031">
    <property type="term" value="P:negative regulation of macrophage activation"/>
    <property type="evidence" value="ECO:0000315"/>
    <property type="project" value="MGI"/>
</dbReference>
<dbReference type="GO" id="GO:0008284">
    <property type="term" value="P:positive regulation of cell population proliferation"/>
    <property type="evidence" value="ECO:0000315"/>
    <property type="project" value="MGI"/>
</dbReference>
<dbReference type="GO" id="GO:0070374">
    <property type="term" value="P:positive regulation of ERK1 and ERK2 cascade"/>
    <property type="evidence" value="ECO:0000316"/>
    <property type="project" value="MGI"/>
</dbReference>
<dbReference type="GO" id="GO:0030334">
    <property type="term" value="P:regulation of cell migration"/>
    <property type="evidence" value="ECO:0000316"/>
    <property type="project" value="MGI"/>
</dbReference>
<dbReference type="CDD" id="cd00111">
    <property type="entry name" value="Trefoil"/>
    <property type="match status" value="2"/>
</dbReference>
<dbReference type="FunFam" id="4.10.110.10:FF:000005">
    <property type="entry name" value="Trefoil factor 2"/>
    <property type="match status" value="1"/>
</dbReference>
<dbReference type="FunFam" id="4.10.110.10:FF:000001">
    <property type="entry name" value="Trefoil factor 3"/>
    <property type="match status" value="1"/>
</dbReference>
<dbReference type="Gene3D" id="4.10.110.10">
    <property type="entry name" value="Spasmolytic Protein, domain 1"/>
    <property type="match status" value="2"/>
</dbReference>
<dbReference type="InterPro" id="IPR017994">
    <property type="entry name" value="P_trefoil_chordata"/>
</dbReference>
<dbReference type="InterPro" id="IPR017957">
    <property type="entry name" value="P_trefoil_CS"/>
</dbReference>
<dbReference type="InterPro" id="IPR000519">
    <property type="entry name" value="P_trefoil_dom"/>
</dbReference>
<dbReference type="InterPro" id="IPR044913">
    <property type="entry name" value="P_trefoil_dom_sf"/>
</dbReference>
<dbReference type="PANTHER" id="PTHR13826">
    <property type="entry name" value="INTESTINAL TREFOIL FACTOR-RELATED"/>
    <property type="match status" value="1"/>
</dbReference>
<dbReference type="PANTHER" id="PTHR13826:SF17">
    <property type="entry name" value="TREFOIL FACTOR 2"/>
    <property type="match status" value="1"/>
</dbReference>
<dbReference type="Pfam" id="PF00088">
    <property type="entry name" value="Trefoil"/>
    <property type="match status" value="2"/>
</dbReference>
<dbReference type="PRINTS" id="PR00680">
    <property type="entry name" value="PTREFOIL"/>
</dbReference>
<dbReference type="SMART" id="SM00018">
    <property type="entry name" value="PD"/>
    <property type="match status" value="2"/>
</dbReference>
<dbReference type="SUPFAM" id="SSF57492">
    <property type="entry name" value="Trefoil"/>
    <property type="match status" value="2"/>
</dbReference>
<dbReference type="PROSITE" id="PS00025">
    <property type="entry name" value="P_TREFOIL_1"/>
    <property type="match status" value="2"/>
</dbReference>
<dbReference type="PROSITE" id="PS51448">
    <property type="entry name" value="P_TREFOIL_2"/>
    <property type="match status" value="2"/>
</dbReference>
<keyword id="KW-1015">Disulfide bond</keyword>
<keyword id="KW-1185">Reference proteome</keyword>
<keyword id="KW-0677">Repeat</keyword>
<keyword id="KW-0964">Secreted</keyword>
<keyword id="KW-0732">Signal</keyword>